<protein>
    <recommendedName>
        <fullName evidence="1">tRNA-specific 2-thiouridylase MnmA</fullName>
        <ecNumber evidence="1">2.8.1.13</ecNumber>
    </recommendedName>
</protein>
<gene>
    <name evidence="1" type="primary">mnmA</name>
    <name type="synonym">trmU</name>
    <name type="ordered locus">AYWB_597</name>
</gene>
<feature type="chain" id="PRO_1000009506" description="tRNA-specific 2-thiouridylase MnmA">
    <location>
        <begin position="1"/>
        <end position="378"/>
    </location>
</feature>
<feature type="region of interest" description="Interaction with target base in tRNA" evidence="1">
    <location>
        <begin position="102"/>
        <end position="104"/>
    </location>
</feature>
<feature type="region of interest" description="Interaction with tRNA" evidence="1">
    <location>
        <begin position="159"/>
        <end position="161"/>
    </location>
</feature>
<feature type="region of interest" description="Interaction with tRNA" evidence="1">
    <location>
        <begin position="316"/>
        <end position="317"/>
    </location>
</feature>
<feature type="active site" description="Nucleophile" evidence="1">
    <location>
        <position position="107"/>
    </location>
</feature>
<feature type="active site" description="Cysteine persulfide intermediate" evidence="1">
    <location>
        <position position="209"/>
    </location>
</feature>
<feature type="binding site" evidence="1">
    <location>
        <begin position="7"/>
        <end position="14"/>
    </location>
    <ligand>
        <name>ATP</name>
        <dbReference type="ChEBI" id="CHEBI:30616"/>
    </ligand>
</feature>
<feature type="binding site" evidence="1">
    <location>
        <position position="33"/>
    </location>
    <ligand>
        <name>ATP</name>
        <dbReference type="ChEBI" id="CHEBI:30616"/>
    </ligand>
</feature>
<feature type="binding site" evidence="1">
    <location>
        <position position="132"/>
    </location>
    <ligand>
        <name>ATP</name>
        <dbReference type="ChEBI" id="CHEBI:30616"/>
    </ligand>
</feature>
<feature type="site" description="Interaction with tRNA" evidence="1">
    <location>
        <position position="133"/>
    </location>
</feature>
<feature type="site" description="Interaction with tRNA" evidence="1">
    <location>
        <position position="349"/>
    </location>
</feature>
<feature type="disulfide bond" description="Alternate" evidence="1">
    <location>
        <begin position="107"/>
        <end position="209"/>
    </location>
</feature>
<evidence type="ECO:0000255" key="1">
    <source>
        <dbReference type="HAMAP-Rule" id="MF_00144"/>
    </source>
</evidence>
<keyword id="KW-0067">ATP-binding</keyword>
<keyword id="KW-0963">Cytoplasm</keyword>
<keyword id="KW-1015">Disulfide bond</keyword>
<keyword id="KW-0547">Nucleotide-binding</keyword>
<keyword id="KW-0694">RNA-binding</keyword>
<keyword id="KW-0808">Transferase</keyword>
<keyword id="KW-0819">tRNA processing</keyword>
<keyword id="KW-0820">tRNA-binding</keyword>
<proteinExistence type="inferred from homology"/>
<sequence length="378" mass="43380">MTKVVVGLSGGVDSAVAAFLLKKQGYLVEAVFMRNWDSNLNFDIQGNPTLNDICPQELDYKDALKVSEQLGIKLHRVDFIEEYWQKVFMSFIKAFENNLTPNPDILCNNEIKFRAFIEYVTTKLAPRYIAMGHYANIIYETFSEQKLFPQLACAVDQNKDQTYFLSQLATKQLQNILFPLGNLTKQEVRQIALENNLINATKKDSTGICFIGERNFFQFLSNYLPAQKGDIKTLDGTFLAHHKGVMYYTIGQRKNLGLGDFSSQKPWFVVGKHLQTNTLYVEQGNTHPYLYSDKALISDIVWRGKKTNLHLQAKMRYRQPNQDVILTWIDQNTLEIYYPQTIKAVTPGQICAFYNNNICCGAGVIKEVYFQGTKRLYT</sequence>
<comment type="function">
    <text evidence="1">Catalyzes the 2-thiolation of uridine at the wobble position (U34) of tRNA, leading to the formation of s(2)U34.</text>
</comment>
<comment type="catalytic activity">
    <reaction evidence="1">
        <text>S-sulfanyl-L-cysteinyl-[protein] + uridine(34) in tRNA + AH2 + ATP = 2-thiouridine(34) in tRNA + L-cysteinyl-[protein] + A + AMP + diphosphate + H(+)</text>
        <dbReference type="Rhea" id="RHEA:47032"/>
        <dbReference type="Rhea" id="RHEA-COMP:10131"/>
        <dbReference type="Rhea" id="RHEA-COMP:11726"/>
        <dbReference type="Rhea" id="RHEA-COMP:11727"/>
        <dbReference type="Rhea" id="RHEA-COMP:11728"/>
        <dbReference type="ChEBI" id="CHEBI:13193"/>
        <dbReference type="ChEBI" id="CHEBI:15378"/>
        <dbReference type="ChEBI" id="CHEBI:17499"/>
        <dbReference type="ChEBI" id="CHEBI:29950"/>
        <dbReference type="ChEBI" id="CHEBI:30616"/>
        <dbReference type="ChEBI" id="CHEBI:33019"/>
        <dbReference type="ChEBI" id="CHEBI:61963"/>
        <dbReference type="ChEBI" id="CHEBI:65315"/>
        <dbReference type="ChEBI" id="CHEBI:87170"/>
        <dbReference type="ChEBI" id="CHEBI:456215"/>
        <dbReference type="EC" id="2.8.1.13"/>
    </reaction>
</comment>
<comment type="subcellular location">
    <subcellularLocation>
        <location evidence="1">Cytoplasm</location>
    </subcellularLocation>
</comment>
<comment type="similarity">
    <text evidence="1">Belongs to the MnmA/TRMU family.</text>
</comment>
<organism>
    <name type="scientific">Aster yellows witches'-broom phytoplasma (strain AYWB)</name>
    <dbReference type="NCBI Taxonomy" id="322098"/>
    <lineage>
        <taxon>Bacteria</taxon>
        <taxon>Bacillati</taxon>
        <taxon>Mycoplasmatota</taxon>
        <taxon>Mollicutes</taxon>
        <taxon>Acholeplasmatales</taxon>
        <taxon>Acholeplasmataceae</taxon>
        <taxon>Candidatus Phytoplasma</taxon>
        <taxon>16SrI (Aster yellows group)</taxon>
    </lineage>
</organism>
<accession>Q2NIM9</accession>
<dbReference type="EC" id="2.8.1.13" evidence="1"/>
<dbReference type="EMBL" id="CP000061">
    <property type="protein sequence ID" value="ABC65714.1"/>
    <property type="molecule type" value="Genomic_DNA"/>
</dbReference>
<dbReference type="SMR" id="Q2NIM9"/>
<dbReference type="STRING" id="322098.AYWB_597"/>
<dbReference type="KEGG" id="ayw:AYWB_597"/>
<dbReference type="eggNOG" id="COG0482">
    <property type="taxonomic scope" value="Bacteria"/>
</dbReference>
<dbReference type="HOGENOM" id="CLU_035188_1_0_14"/>
<dbReference type="OrthoDB" id="9800696at2"/>
<dbReference type="PhylomeDB" id="Q2NIM9"/>
<dbReference type="Proteomes" id="UP000001934">
    <property type="component" value="Chromosome"/>
</dbReference>
<dbReference type="GO" id="GO:0005737">
    <property type="term" value="C:cytoplasm"/>
    <property type="evidence" value="ECO:0007669"/>
    <property type="project" value="UniProtKB-SubCell"/>
</dbReference>
<dbReference type="GO" id="GO:0005524">
    <property type="term" value="F:ATP binding"/>
    <property type="evidence" value="ECO:0007669"/>
    <property type="project" value="UniProtKB-KW"/>
</dbReference>
<dbReference type="GO" id="GO:0000049">
    <property type="term" value="F:tRNA binding"/>
    <property type="evidence" value="ECO:0007669"/>
    <property type="project" value="UniProtKB-KW"/>
</dbReference>
<dbReference type="GO" id="GO:0103016">
    <property type="term" value="F:tRNA-uridine 2-sulfurtransferase activity"/>
    <property type="evidence" value="ECO:0007669"/>
    <property type="project" value="UniProtKB-EC"/>
</dbReference>
<dbReference type="GO" id="GO:0002143">
    <property type="term" value="P:tRNA wobble position uridine thiolation"/>
    <property type="evidence" value="ECO:0007669"/>
    <property type="project" value="TreeGrafter"/>
</dbReference>
<dbReference type="CDD" id="cd01998">
    <property type="entry name" value="MnmA_TRMU-like"/>
    <property type="match status" value="1"/>
</dbReference>
<dbReference type="FunFam" id="3.40.50.620:FF:000104">
    <property type="entry name" value="Mitochondrial tRNA-specific 2-thiouridylase 1"/>
    <property type="match status" value="1"/>
</dbReference>
<dbReference type="FunFam" id="2.30.30.280:FF:000001">
    <property type="entry name" value="tRNA-specific 2-thiouridylase MnmA"/>
    <property type="match status" value="1"/>
</dbReference>
<dbReference type="Gene3D" id="2.30.30.280">
    <property type="entry name" value="Adenine nucleotide alpha hydrolases-like domains"/>
    <property type="match status" value="1"/>
</dbReference>
<dbReference type="Gene3D" id="3.40.50.620">
    <property type="entry name" value="HUPs"/>
    <property type="match status" value="1"/>
</dbReference>
<dbReference type="Gene3D" id="2.40.30.10">
    <property type="entry name" value="Translation factors"/>
    <property type="match status" value="1"/>
</dbReference>
<dbReference type="HAMAP" id="MF_00144">
    <property type="entry name" value="tRNA_thiouridyl_MnmA"/>
    <property type="match status" value="1"/>
</dbReference>
<dbReference type="InterPro" id="IPR004506">
    <property type="entry name" value="MnmA-like"/>
</dbReference>
<dbReference type="InterPro" id="IPR046885">
    <property type="entry name" value="MnmA-like_C"/>
</dbReference>
<dbReference type="InterPro" id="IPR046884">
    <property type="entry name" value="MnmA-like_central"/>
</dbReference>
<dbReference type="InterPro" id="IPR023382">
    <property type="entry name" value="MnmA-like_central_sf"/>
</dbReference>
<dbReference type="InterPro" id="IPR014729">
    <property type="entry name" value="Rossmann-like_a/b/a_fold"/>
</dbReference>
<dbReference type="NCBIfam" id="NF001138">
    <property type="entry name" value="PRK00143.1"/>
    <property type="match status" value="1"/>
</dbReference>
<dbReference type="NCBIfam" id="TIGR00420">
    <property type="entry name" value="trmU"/>
    <property type="match status" value="1"/>
</dbReference>
<dbReference type="PANTHER" id="PTHR11933:SF5">
    <property type="entry name" value="MITOCHONDRIAL TRNA-SPECIFIC 2-THIOURIDYLASE 1"/>
    <property type="match status" value="1"/>
</dbReference>
<dbReference type="PANTHER" id="PTHR11933">
    <property type="entry name" value="TRNA 5-METHYLAMINOMETHYL-2-THIOURIDYLATE -METHYLTRANSFERASE"/>
    <property type="match status" value="1"/>
</dbReference>
<dbReference type="Pfam" id="PF03054">
    <property type="entry name" value="tRNA_Me_trans"/>
    <property type="match status" value="1"/>
</dbReference>
<dbReference type="Pfam" id="PF20258">
    <property type="entry name" value="tRNA_Me_trans_C"/>
    <property type="match status" value="1"/>
</dbReference>
<dbReference type="Pfam" id="PF20259">
    <property type="entry name" value="tRNA_Me_trans_M"/>
    <property type="match status" value="1"/>
</dbReference>
<dbReference type="SUPFAM" id="SSF52402">
    <property type="entry name" value="Adenine nucleotide alpha hydrolases-like"/>
    <property type="match status" value="1"/>
</dbReference>
<reference key="1">
    <citation type="journal article" date="2006" name="J. Bacteriol.">
        <title>Living with genome instability: the adaptation of phytoplasmas to diverse environments of their insect and plant hosts.</title>
        <authorList>
            <person name="Bai X."/>
            <person name="Zhang J."/>
            <person name="Ewing A."/>
            <person name="Miller S.A."/>
            <person name="Jancso Radek A."/>
            <person name="Shevchenko D.V."/>
            <person name="Tsukerman K."/>
            <person name="Walunas T."/>
            <person name="Lapidus A."/>
            <person name="Campbell J.W."/>
            <person name="Hogenhout S.A."/>
        </authorList>
    </citation>
    <scope>NUCLEOTIDE SEQUENCE [LARGE SCALE GENOMIC DNA]</scope>
    <source>
        <strain>AYWB</strain>
    </source>
</reference>
<name>MNMA_AYWBP</name>